<proteinExistence type="inferred from homology"/>
<dbReference type="EC" id="2.8.4.3" evidence="1"/>
<dbReference type="EMBL" id="CP001132">
    <property type="protein sequence ID" value="ACH82998.1"/>
    <property type="molecule type" value="Genomic_DNA"/>
</dbReference>
<dbReference type="RefSeq" id="WP_012536225.1">
    <property type="nucleotide sequence ID" value="NC_011206.1"/>
</dbReference>
<dbReference type="SMR" id="B5ENG4"/>
<dbReference type="GeneID" id="65279950"/>
<dbReference type="KEGG" id="afe:Lferr_0748"/>
<dbReference type="eggNOG" id="COG0621">
    <property type="taxonomic scope" value="Bacteria"/>
</dbReference>
<dbReference type="HOGENOM" id="CLU_018697_2_2_6"/>
<dbReference type="GO" id="GO:0005829">
    <property type="term" value="C:cytosol"/>
    <property type="evidence" value="ECO:0007669"/>
    <property type="project" value="TreeGrafter"/>
</dbReference>
<dbReference type="GO" id="GO:0051539">
    <property type="term" value="F:4 iron, 4 sulfur cluster binding"/>
    <property type="evidence" value="ECO:0007669"/>
    <property type="project" value="UniProtKB-UniRule"/>
</dbReference>
<dbReference type="GO" id="GO:0046872">
    <property type="term" value="F:metal ion binding"/>
    <property type="evidence" value="ECO:0007669"/>
    <property type="project" value="UniProtKB-KW"/>
</dbReference>
<dbReference type="GO" id="GO:0035597">
    <property type="term" value="F:N6-isopentenyladenosine methylthiotransferase activity"/>
    <property type="evidence" value="ECO:0007669"/>
    <property type="project" value="TreeGrafter"/>
</dbReference>
<dbReference type="CDD" id="cd01335">
    <property type="entry name" value="Radical_SAM"/>
    <property type="match status" value="1"/>
</dbReference>
<dbReference type="FunFam" id="3.40.50.12160:FF:000001">
    <property type="entry name" value="tRNA-2-methylthio-N(6)-dimethylallyladenosine synthase"/>
    <property type="match status" value="1"/>
</dbReference>
<dbReference type="FunFam" id="3.80.30.20:FF:000001">
    <property type="entry name" value="tRNA-2-methylthio-N(6)-dimethylallyladenosine synthase 2"/>
    <property type="match status" value="1"/>
</dbReference>
<dbReference type="Gene3D" id="3.40.50.12160">
    <property type="entry name" value="Methylthiotransferase, N-terminal domain"/>
    <property type="match status" value="1"/>
</dbReference>
<dbReference type="Gene3D" id="3.80.30.20">
    <property type="entry name" value="tm_1862 like domain"/>
    <property type="match status" value="1"/>
</dbReference>
<dbReference type="HAMAP" id="MF_01864">
    <property type="entry name" value="tRNA_metthiotr_MiaB"/>
    <property type="match status" value="1"/>
</dbReference>
<dbReference type="InterPro" id="IPR006638">
    <property type="entry name" value="Elp3/MiaA/NifB-like_rSAM"/>
</dbReference>
<dbReference type="InterPro" id="IPR005839">
    <property type="entry name" value="Methylthiotransferase"/>
</dbReference>
<dbReference type="InterPro" id="IPR020612">
    <property type="entry name" value="Methylthiotransferase_CS"/>
</dbReference>
<dbReference type="InterPro" id="IPR013848">
    <property type="entry name" value="Methylthiotransferase_N"/>
</dbReference>
<dbReference type="InterPro" id="IPR038135">
    <property type="entry name" value="Methylthiotransferase_N_sf"/>
</dbReference>
<dbReference type="InterPro" id="IPR006463">
    <property type="entry name" value="MiaB_methiolase"/>
</dbReference>
<dbReference type="InterPro" id="IPR007197">
    <property type="entry name" value="rSAM"/>
</dbReference>
<dbReference type="InterPro" id="IPR023404">
    <property type="entry name" value="rSAM_horseshoe"/>
</dbReference>
<dbReference type="InterPro" id="IPR002792">
    <property type="entry name" value="TRAM_dom"/>
</dbReference>
<dbReference type="NCBIfam" id="TIGR01574">
    <property type="entry name" value="miaB-methiolase"/>
    <property type="match status" value="1"/>
</dbReference>
<dbReference type="NCBIfam" id="TIGR00089">
    <property type="entry name" value="MiaB/RimO family radical SAM methylthiotransferase"/>
    <property type="match status" value="1"/>
</dbReference>
<dbReference type="PANTHER" id="PTHR43020">
    <property type="entry name" value="CDK5 REGULATORY SUBUNIT-ASSOCIATED PROTEIN 1"/>
    <property type="match status" value="1"/>
</dbReference>
<dbReference type="PANTHER" id="PTHR43020:SF2">
    <property type="entry name" value="MITOCHONDRIAL TRNA METHYLTHIOTRANSFERASE CDK5RAP1"/>
    <property type="match status" value="1"/>
</dbReference>
<dbReference type="Pfam" id="PF04055">
    <property type="entry name" value="Radical_SAM"/>
    <property type="match status" value="1"/>
</dbReference>
<dbReference type="Pfam" id="PF01938">
    <property type="entry name" value="TRAM"/>
    <property type="match status" value="1"/>
</dbReference>
<dbReference type="Pfam" id="PF00919">
    <property type="entry name" value="UPF0004"/>
    <property type="match status" value="1"/>
</dbReference>
<dbReference type="SFLD" id="SFLDF00273">
    <property type="entry name" value="(dimethylallyl)adenosine_tRNA"/>
    <property type="match status" value="1"/>
</dbReference>
<dbReference type="SFLD" id="SFLDG01082">
    <property type="entry name" value="B12-binding_domain_containing"/>
    <property type="match status" value="1"/>
</dbReference>
<dbReference type="SFLD" id="SFLDS00029">
    <property type="entry name" value="Radical_SAM"/>
    <property type="match status" value="1"/>
</dbReference>
<dbReference type="SMART" id="SM00729">
    <property type="entry name" value="Elp3"/>
    <property type="match status" value="1"/>
</dbReference>
<dbReference type="SUPFAM" id="SSF102114">
    <property type="entry name" value="Radical SAM enzymes"/>
    <property type="match status" value="1"/>
</dbReference>
<dbReference type="PROSITE" id="PS51449">
    <property type="entry name" value="MTTASE_N"/>
    <property type="match status" value="1"/>
</dbReference>
<dbReference type="PROSITE" id="PS01278">
    <property type="entry name" value="MTTASE_RADICAL"/>
    <property type="match status" value="1"/>
</dbReference>
<dbReference type="PROSITE" id="PS51918">
    <property type="entry name" value="RADICAL_SAM"/>
    <property type="match status" value="1"/>
</dbReference>
<dbReference type="PROSITE" id="PS50926">
    <property type="entry name" value="TRAM"/>
    <property type="match status" value="1"/>
</dbReference>
<evidence type="ECO:0000255" key="1">
    <source>
        <dbReference type="HAMAP-Rule" id="MF_01864"/>
    </source>
</evidence>
<evidence type="ECO:0000255" key="2">
    <source>
        <dbReference type="PROSITE-ProRule" id="PRU01266"/>
    </source>
</evidence>
<keyword id="KW-0004">4Fe-4S</keyword>
<keyword id="KW-0963">Cytoplasm</keyword>
<keyword id="KW-0408">Iron</keyword>
<keyword id="KW-0411">Iron-sulfur</keyword>
<keyword id="KW-0479">Metal-binding</keyword>
<keyword id="KW-0949">S-adenosyl-L-methionine</keyword>
<keyword id="KW-0808">Transferase</keyword>
<keyword id="KW-0819">tRNA processing</keyword>
<name>MIAB_ACIF5</name>
<protein>
    <recommendedName>
        <fullName evidence="1">tRNA-2-methylthio-N(6)-dimethylallyladenosine synthase</fullName>
        <ecNumber evidence="1">2.8.4.3</ecNumber>
    </recommendedName>
    <alternativeName>
        <fullName evidence="1">(Dimethylallyl)adenosine tRNA methylthiotransferase MiaB</fullName>
    </alternativeName>
    <alternativeName>
        <fullName evidence="1">tRNA-i(6)A37 methylthiotransferase</fullName>
    </alternativeName>
</protein>
<sequence length="451" mass="49868">MQNLYIKTYGCQMNEYDSERMADTLAVSHGLRLVDDPVLADVLLLNTCSIREKAEDKVFTQLGFWRPFKERRPEVVIGVGGCVASQEGERLRRRAPYVDLVFGPQTLHRLPDLLDACLAERRPQVDIAFPMLEKFDHLPQRPGRDGATAFVTIQEGCDKFCTFCVVPHTRGREYSRSMPDILREVRALVEQGVREITLLGQNVNAYRGATGLVGEGGLADLLERLARIPGLLRLRYTTSHPANLDDELIAAHGSIGILAPHLHLPVQSGSDRILRRMHRKHTVGQYLDKVDRLRAARPGIQISSDFIVGFPGETDADFAATMELIDAVRFDQSFSFKYSQRPNTPALKLKDSVPEAVKEDRLAVLQGRINGLAQGYAQALVGTQQAVLITGPSRRDAQELTGKTACNRAVNLAGSMDWVGQMLDVEITAALPNSLRGRAALVAPTSQRLAV</sequence>
<comment type="function">
    <text evidence="1">Catalyzes the methylthiolation of N6-(dimethylallyl)adenosine (i(6)A), leading to the formation of 2-methylthio-N6-(dimethylallyl)adenosine (ms(2)i(6)A) at position 37 in tRNAs that read codons beginning with uridine.</text>
</comment>
<comment type="catalytic activity">
    <reaction evidence="1">
        <text>N(6)-dimethylallyladenosine(37) in tRNA + (sulfur carrier)-SH + AH2 + 2 S-adenosyl-L-methionine = 2-methylsulfanyl-N(6)-dimethylallyladenosine(37) in tRNA + (sulfur carrier)-H + 5'-deoxyadenosine + L-methionine + A + S-adenosyl-L-homocysteine + 2 H(+)</text>
        <dbReference type="Rhea" id="RHEA:37067"/>
        <dbReference type="Rhea" id="RHEA-COMP:10375"/>
        <dbReference type="Rhea" id="RHEA-COMP:10376"/>
        <dbReference type="Rhea" id="RHEA-COMP:14737"/>
        <dbReference type="Rhea" id="RHEA-COMP:14739"/>
        <dbReference type="ChEBI" id="CHEBI:13193"/>
        <dbReference type="ChEBI" id="CHEBI:15378"/>
        <dbReference type="ChEBI" id="CHEBI:17319"/>
        <dbReference type="ChEBI" id="CHEBI:17499"/>
        <dbReference type="ChEBI" id="CHEBI:29917"/>
        <dbReference type="ChEBI" id="CHEBI:57844"/>
        <dbReference type="ChEBI" id="CHEBI:57856"/>
        <dbReference type="ChEBI" id="CHEBI:59789"/>
        <dbReference type="ChEBI" id="CHEBI:64428"/>
        <dbReference type="ChEBI" id="CHEBI:74415"/>
        <dbReference type="ChEBI" id="CHEBI:74417"/>
        <dbReference type="EC" id="2.8.4.3"/>
    </reaction>
</comment>
<comment type="cofactor">
    <cofactor evidence="1">
        <name>[4Fe-4S] cluster</name>
        <dbReference type="ChEBI" id="CHEBI:49883"/>
    </cofactor>
    <text evidence="1">Binds 2 [4Fe-4S] clusters. One cluster is coordinated with 3 cysteines and an exchangeable S-adenosyl-L-methionine.</text>
</comment>
<comment type="subunit">
    <text evidence="1">Monomer.</text>
</comment>
<comment type="subcellular location">
    <subcellularLocation>
        <location evidence="1">Cytoplasm</location>
    </subcellularLocation>
</comment>
<comment type="similarity">
    <text evidence="1">Belongs to the methylthiotransferase family. MiaB subfamily.</text>
</comment>
<organism>
    <name type="scientific">Acidithiobacillus ferrooxidans (strain ATCC 53993 / BNL-5-31)</name>
    <name type="common">Leptospirillum ferrooxidans (ATCC 53993)</name>
    <dbReference type="NCBI Taxonomy" id="380394"/>
    <lineage>
        <taxon>Bacteria</taxon>
        <taxon>Pseudomonadati</taxon>
        <taxon>Pseudomonadota</taxon>
        <taxon>Acidithiobacillia</taxon>
        <taxon>Acidithiobacillales</taxon>
        <taxon>Acidithiobacillaceae</taxon>
        <taxon>Acidithiobacillus</taxon>
    </lineage>
</organism>
<accession>B5ENG4</accession>
<gene>
    <name evidence="1" type="primary">miaB</name>
    <name type="ordered locus">Lferr_0748</name>
</gene>
<feature type="chain" id="PRO_0000374082" description="tRNA-2-methylthio-N(6)-dimethylallyladenosine synthase">
    <location>
        <begin position="1"/>
        <end position="451"/>
    </location>
</feature>
<feature type="domain" description="MTTase N-terminal" evidence="1">
    <location>
        <begin position="2"/>
        <end position="119"/>
    </location>
</feature>
<feature type="domain" description="Radical SAM core" evidence="2">
    <location>
        <begin position="143"/>
        <end position="377"/>
    </location>
</feature>
<feature type="domain" description="TRAM" evidence="1">
    <location>
        <begin position="378"/>
        <end position="441"/>
    </location>
</feature>
<feature type="binding site" evidence="1">
    <location>
        <position position="11"/>
    </location>
    <ligand>
        <name>[4Fe-4S] cluster</name>
        <dbReference type="ChEBI" id="CHEBI:49883"/>
        <label>1</label>
    </ligand>
</feature>
<feature type="binding site" evidence="1">
    <location>
        <position position="48"/>
    </location>
    <ligand>
        <name>[4Fe-4S] cluster</name>
        <dbReference type="ChEBI" id="CHEBI:49883"/>
        <label>1</label>
    </ligand>
</feature>
<feature type="binding site" evidence="1">
    <location>
        <position position="82"/>
    </location>
    <ligand>
        <name>[4Fe-4S] cluster</name>
        <dbReference type="ChEBI" id="CHEBI:49883"/>
        <label>1</label>
    </ligand>
</feature>
<feature type="binding site" evidence="1">
    <location>
        <position position="157"/>
    </location>
    <ligand>
        <name>[4Fe-4S] cluster</name>
        <dbReference type="ChEBI" id="CHEBI:49883"/>
        <label>2</label>
        <note>4Fe-4S-S-AdoMet</note>
    </ligand>
</feature>
<feature type="binding site" evidence="1">
    <location>
        <position position="161"/>
    </location>
    <ligand>
        <name>[4Fe-4S] cluster</name>
        <dbReference type="ChEBI" id="CHEBI:49883"/>
        <label>2</label>
        <note>4Fe-4S-S-AdoMet</note>
    </ligand>
</feature>
<feature type="binding site" evidence="1">
    <location>
        <position position="164"/>
    </location>
    <ligand>
        <name>[4Fe-4S] cluster</name>
        <dbReference type="ChEBI" id="CHEBI:49883"/>
        <label>2</label>
        <note>4Fe-4S-S-AdoMet</note>
    </ligand>
</feature>
<reference key="1">
    <citation type="submission" date="2008-08" db="EMBL/GenBank/DDBJ databases">
        <title>Complete sequence of Acidithiobacillus ferrooxidans ATCC 53993.</title>
        <authorList>
            <person name="Lucas S."/>
            <person name="Copeland A."/>
            <person name="Lapidus A."/>
            <person name="Glavina del Rio T."/>
            <person name="Dalin E."/>
            <person name="Tice H."/>
            <person name="Bruce D."/>
            <person name="Goodwin L."/>
            <person name="Pitluck S."/>
            <person name="Sims D."/>
            <person name="Brettin T."/>
            <person name="Detter J.C."/>
            <person name="Han C."/>
            <person name="Kuske C.R."/>
            <person name="Larimer F."/>
            <person name="Land M."/>
            <person name="Hauser L."/>
            <person name="Kyrpides N."/>
            <person name="Lykidis A."/>
            <person name="Borole A.P."/>
        </authorList>
    </citation>
    <scope>NUCLEOTIDE SEQUENCE [LARGE SCALE GENOMIC DNA]</scope>
    <source>
        <strain>ATCC 53993 / BNL-5-31</strain>
    </source>
</reference>